<accession>Q2YQR3</accession>
<keyword id="KW-0963">Cytoplasm</keyword>
<keyword id="KW-0460">Magnesium</keyword>
<keyword id="KW-0479">Metal-binding</keyword>
<keyword id="KW-0548">Nucleotidyltransferase</keyword>
<keyword id="KW-1185">Reference proteome</keyword>
<keyword id="KW-0694">RNA-binding</keyword>
<keyword id="KW-0808">Transferase</keyword>
<evidence type="ECO:0000255" key="1">
    <source>
        <dbReference type="HAMAP-Rule" id="MF_01595"/>
    </source>
</evidence>
<organism>
    <name type="scientific">Brucella abortus (strain 2308)</name>
    <dbReference type="NCBI Taxonomy" id="359391"/>
    <lineage>
        <taxon>Bacteria</taxon>
        <taxon>Pseudomonadati</taxon>
        <taxon>Pseudomonadota</taxon>
        <taxon>Alphaproteobacteria</taxon>
        <taxon>Hyphomicrobiales</taxon>
        <taxon>Brucellaceae</taxon>
        <taxon>Brucella/Ochrobactrum group</taxon>
        <taxon>Brucella</taxon>
    </lineage>
</organism>
<reference key="1">
    <citation type="journal article" date="2005" name="Infect. Immun.">
        <title>Whole-genome analyses of speciation events in pathogenic Brucellae.</title>
        <authorList>
            <person name="Chain P.S."/>
            <person name="Comerci D.J."/>
            <person name="Tolmasky M.E."/>
            <person name="Larimer F.W."/>
            <person name="Malfatti S.A."/>
            <person name="Vergez L.M."/>
            <person name="Aguero F."/>
            <person name="Land M.L."/>
            <person name="Ugalde R.A."/>
            <person name="Garcia E."/>
        </authorList>
    </citation>
    <scope>NUCLEOTIDE SEQUENCE [LARGE SCALE GENOMIC DNA]</scope>
    <source>
        <strain>2308</strain>
    </source>
</reference>
<feature type="chain" id="PRO_0000329546" description="Polyribonucleotide nucleotidyltransferase">
    <location>
        <begin position="1"/>
        <end position="714"/>
    </location>
</feature>
<feature type="domain" description="KH" evidence="1">
    <location>
        <begin position="555"/>
        <end position="614"/>
    </location>
</feature>
<feature type="domain" description="S1 motif" evidence="1">
    <location>
        <begin position="624"/>
        <end position="692"/>
    </location>
</feature>
<feature type="binding site" evidence="1">
    <location>
        <position position="488"/>
    </location>
    <ligand>
        <name>Mg(2+)</name>
        <dbReference type="ChEBI" id="CHEBI:18420"/>
    </ligand>
</feature>
<feature type="binding site" evidence="1">
    <location>
        <position position="494"/>
    </location>
    <ligand>
        <name>Mg(2+)</name>
        <dbReference type="ChEBI" id="CHEBI:18420"/>
    </ligand>
</feature>
<name>PNP_BRUA2</name>
<dbReference type="EC" id="2.7.7.8" evidence="1"/>
<dbReference type="EMBL" id="AM040264">
    <property type="protein sequence ID" value="CAJ12125.1"/>
    <property type="molecule type" value="Genomic_DNA"/>
</dbReference>
<dbReference type="RefSeq" id="WP_002965231.1">
    <property type="nucleotide sequence ID" value="NZ_KN046823.1"/>
</dbReference>
<dbReference type="SMR" id="Q2YQR3"/>
<dbReference type="STRING" id="359391.BAB1_2169"/>
<dbReference type="GeneID" id="97534578"/>
<dbReference type="KEGG" id="bmf:BAB1_2169"/>
<dbReference type="PATRIC" id="fig|359391.11.peg.1406"/>
<dbReference type="HOGENOM" id="CLU_004217_2_2_5"/>
<dbReference type="PhylomeDB" id="Q2YQR3"/>
<dbReference type="Proteomes" id="UP000002719">
    <property type="component" value="Chromosome I"/>
</dbReference>
<dbReference type="GO" id="GO:0005829">
    <property type="term" value="C:cytosol"/>
    <property type="evidence" value="ECO:0007669"/>
    <property type="project" value="TreeGrafter"/>
</dbReference>
<dbReference type="GO" id="GO:0000175">
    <property type="term" value="F:3'-5'-RNA exonuclease activity"/>
    <property type="evidence" value="ECO:0007669"/>
    <property type="project" value="TreeGrafter"/>
</dbReference>
<dbReference type="GO" id="GO:0000287">
    <property type="term" value="F:magnesium ion binding"/>
    <property type="evidence" value="ECO:0007669"/>
    <property type="project" value="UniProtKB-UniRule"/>
</dbReference>
<dbReference type="GO" id="GO:0004654">
    <property type="term" value="F:polyribonucleotide nucleotidyltransferase activity"/>
    <property type="evidence" value="ECO:0007669"/>
    <property type="project" value="UniProtKB-UniRule"/>
</dbReference>
<dbReference type="GO" id="GO:0003723">
    <property type="term" value="F:RNA binding"/>
    <property type="evidence" value="ECO:0007669"/>
    <property type="project" value="UniProtKB-UniRule"/>
</dbReference>
<dbReference type="GO" id="GO:0006402">
    <property type="term" value="P:mRNA catabolic process"/>
    <property type="evidence" value="ECO:0007669"/>
    <property type="project" value="UniProtKB-UniRule"/>
</dbReference>
<dbReference type="GO" id="GO:0006396">
    <property type="term" value="P:RNA processing"/>
    <property type="evidence" value="ECO:0007669"/>
    <property type="project" value="InterPro"/>
</dbReference>
<dbReference type="CDD" id="cd02393">
    <property type="entry name" value="KH-I_PNPase"/>
    <property type="match status" value="1"/>
</dbReference>
<dbReference type="CDD" id="cd11363">
    <property type="entry name" value="RNase_PH_PNPase_1"/>
    <property type="match status" value="1"/>
</dbReference>
<dbReference type="CDD" id="cd11364">
    <property type="entry name" value="RNase_PH_PNPase_2"/>
    <property type="match status" value="1"/>
</dbReference>
<dbReference type="CDD" id="cd04472">
    <property type="entry name" value="S1_PNPase"/>
    <property type="match status" value="1"/>
</dbReference>
<dbReference type="FunFam" id="2.40.50.140:FF:000107">
    <property type="entry name" value="Polyribonucleotide nucleotidyltransferase"/>
    <property type="match status" value="1"/>
</dbReference>
<dbReference type="FunFam" id="3.30.1370.10:FF:000001">
    <property type="entry name" value="Polyribonucleotide nucleotidyltransferase"/>
    <property type="match status" value="1"/>
</dbReference>
<dbReference type="FunFam" id="3.30.230.70:FF:000001">
    <property type="entry name" value="Polyribonucleotide nucleotidyltransferase"/>
    <property type="match status" value="1"/>
</dbReference>
<dbReference type="FunFam" id="3.30.230.70:FF:000002">
    <property type="entry name" value="Polyribonucleotide nucleotidyltransferase"/>
    <property type="match status" value="1"/>
</dbReference>
<dbReference type="Gene3D" id="3.30.230.70">
    <property type="entry name" value="GHMP Kinase, N-terminal domain"/>
    <property type="match status" value="2"/>
</dbReference>
<dbReference type="Gene3D" id="3.30.1370.10">
    <property type="entry name" value="K Homology domain, type 1"/>
    <property type="match status" value="1"/>
</dbReference>
<dbReference type="Gene3D" id="2.40.50.140">
    <property type="entry name" value="Nucleic acid-binding proteins"/>
    <property type="match status" value="1"/>
</dbReference>
<dbReference type="HAMAP" id="MF_01595">
    <property type="entry name" value="PNPase"/>
    <property type="match status" value="1"/>
</dbReference>
<dbReference type="InterPro" id="IPR001247">
    <property type="entry name" value="ExoRNase_PH_dom1"/>
</dbReference>
<dbReference type="InterPro" id="IPR015847">
    <property type="entry name" value="ExoRNase_PH_dom2"/>
</dbReference>
<dbReference type="InterPro" id="IPR036345">
    <property type="entry name" value="ExoRNase_PH_dom2_sf"/>
</dbReference>
<dbReference type="InterPro" id="IPR004087">
    <property type="entry name" value="KH_dom"/>
</dbReference>
<dbReference type="InterPro" id="IPR004088">
    <property type="entry name" value="KH_dom_type_1"/>
</dbReference>
<dbReference type="InterPro" id="IPR036612">
    <property type="entry name" value="KH_dom_type_1_sf"/>
</dbReference>
<dbReference type="InterPro" id="IPR012340">
    <property type="entry name" value="NA-bd_OB-fold"/>
</dbReference>
<dbReference type="InterPro" id="IPR012162">
    <property type="entry name" value="PNPase"/>
</dbReference>
<dbReference type="InterPro" id="IPR027408">
    <property type="entry name" value="PNPase/RNase_PH_dom_sf"/>
</dbReference>
<dbReference type="InterPro" id="IPR015848">
    <property type="entry name" value="PNPase_PH_RNA-bd_bac/org-type"/>
</dbReference>
<dbReference type="InterPro" id="IPR020568">
    <property type="entry name" value="Ribosomal_Su5_D2-typ_SF"/>
</dbReference>
<dbReference type="InterPro" id="IPR003029">
    <property type="entry name" value="S1_domain"/>
</dbReference>
<dbReference type="NCBIfam" id="TIGR03591">
    <property type="entry name" value="polynuc_phos"/>
    <property type="match status" value="1"/>
</dbReference>
<dbReference type="NCBIfam" id="NF008805">
    <property type="entry name" value="PRK11824.1"/>
    <property type="match status" value="1"/>
</dbReference>
<dbReference type="PANTHER" id="PTHR11252">
    <property type="entry name" value="POLYRIBONUCLEOTIDE NUCLEOTIDYLTRANSFERASE"/>
    <property type="match status" value="1"/>
</dbReference>
<dbReference type="PANTHER" id="PTHR11252:SF0">
    <property type="entry name" value="POLYRIBONUCLEOTIDE NUCLEOTIDYLTRANSFERASE 1, MITOCHONDRIAL"/>
    <property type="match status" value="1"/>
</dbReference>
<dbReference type="Pfam" id="PF00013">
    <property type="entry name" value="KH_1"/>
    <property type="match status" value="1"/>
</dbReference>
<dbReference type="Pfam" id="PF03726">
    <property type="entry name" value="PNPase"/>
    <property type="match status" value="1"/>
</dbReference>
<dbReference type="Pfam" id="PF01138">
    <property type="entry name" value="RNase_PH"/>
    <property type="match status" value="2"/>
</dbReference>
<dbReference type="Pfam" id="PF03725">
    <property type="entry name" value="RNase_PH_C"/>
    <property type="match status" value="2"/>
</dbReference>
<dbReference type="Pfam" id="PF00575">
    <property type="entry name" value="S1"/>
    <property type="match status" value="1"/>
</dbReference>
<dbReference type="PIRSF" id="PIRSF005499">
    <property type="entry name" value="PNPase"/>
    <property type="match status" value="1"/>
</dbReference>
<dbReference type="SMART" id="SM00322">
    <property type="entry name" value="KH"/>
    <property type="match status" value="1"/>
</dbReference>
<dbReference type="SMART" id="SM00316">
    <property type="entry name" value="S1"/>
    <property type="match status" value="1"/>
</dbReference>
<dbReference type="SUPFAM" id="SSF54791">
    <property type="entry name" value="Eukaryotic type KH-domain (KH-domain type I)"/>
    <property type="match status" value="1"/>
</dbReference>
<dbReference type="SUPFAM" id="SSF50249">
    <property type="entry name" value="Nucleic acid-binding proteins"/>
    <property type="match status" value="1"/>
</dbReference>
<dbReference type="SUPFAM" id="SSF55666">
    <property type="entry name" value="Ribonuclease PH domain 2-like"/>
    <property type="match status" value="2"/>
</dbReference>
<dbReference type="SUPFAM" id="SSF54211">
    <property type="entry name" value="Ribosomal protein S5 domain 2-like"/>
    <property type="match status" value="2"/>
</dbReference>
<dbReference type="PROSITE" id="PS50084">
    <property type="entry name" value="KH_TYPE_1"/>
    <property type="match status" value="1"/>
</dbReference>
<dbReference type="PROSITE" id="PS50126">
    <property type="entry name" value="S1"/>
    <property type="match status" value="1"/>
</dbReference>
<sequence length="714" mass="77730">MFNTHKVEIEWGGRPLTLETGKIARQADGAVLATYGETAVLATVVSAKEPKPGQDFFPLTVNYQEKTYAAGKIPGGYFKREGRPSENETLVSRLIDRPIRPLFVDGYKNDTQVVITVLQHDLENNPDILSMVAASAALTISGVPFMGPISGARVGYIDGEYVLNPNIDEMPESKLDLVVAGTSEAVLMVESEAQELPEDVMLGAVMFGHKSFQPVIDAIIKLAEVAAKEPRDFQPEDLSELEAKVLAVVENDLREAYKITEKQARYAAVDAAKAKAKEHFFPEGVEETEMSAEQFATIFKHLQAKIVRWNILDTGNRIDGRDLSTVRPIVSEVGILPRTHGSALFTRGETQAIVVATLGTGEDEQMIDALTGTYKESFMLHYNFPPYSVGETGRMGSPGRREIGHGKLAWRAIHPMLPAAEQFPYTIRAVSEITESNGSSSMATVCGTSLALMDAGVPIVRPVAGIAMGLIKEGERFAVLSDILGDEDHLGDMDFKVAGTEFGITSLQMDIKIDGITEEIMKVALEQAKGGRVHILGEMAKAISSSRAELGEFAPRIEVMNIPTDKIRDVIGSGGKVIREIVEKTGAKINIEDDGTVKIASSNGKEIEAAKKWIHSIVAEPEVGEIYEGTVVKTADFGAFVNFFGPRDGLVHISQLAADRVAKTTDVVKEGQKVWVKLMGFDERGKVRLSMKVVDQETGKEIVAEKKKEEVDAE</sequence>
<protein>
    <recommendedName>
        <fullName evidence="1">Polyribonucleotide nucleotidyltransferase</fullName>
        <ecNumber evidence="1">2.7.7.8</ecNumber>
    </recommendedName>
    <alternativeName>
        <fullName evidence="1">Polynucleotide phosphorylase</fullName>
        <shortName evidence="1">PNPase</shortName>
    </alternativeName>
</protein>
<proteinExistence type="inferred from homology"/>
<comment type="function">
    <text evidence="1">Involved in mRNA degradation. Catalyzes the phosphorolysis of single-stranded polyribonucleotides processively in the 3'- to 5'-direction.</text>
</comment>
<comment type="catalytic activity">
    <reaction evidence="1">
        <text>RNA(n+1) + phosphate = RNA(n) + a ribonucleoside 5'-diphosphate</text>
        <dbReference type="Rhea" id="RHEA:22096"/>
        <dbReference type="Rhea" id="RHEA-COMP:14527"/>
        <dbReference type="Rhea" id="RHEA-COMP:17342"/>
        <dbReference type="ChEBI" id="CHEBI:43474"/>
        <dbReference type="ChEBI" id="CHEBI:57930"/>
        <dbReference type="ChEBI" id="CHEBI:140395"/>
        <dbReference type="EC" id="2.7.7.8"/>
    </reaction>
</comment>
<comment type="cofactor">
    <cofactor evidence="1">
        <name>Mg(2+)</name>
        <dbReference type="ChEBI" id="CHEBI:18420"/>
    </cofactor>
</comment>
<comment type="subcellular location">
    <subcellularLocation>
        <location evidence="1">Cytoplasm</location>
    </subcellularLocation>
</comment>
<comment type="similarity">
    <text evidence="1">Belongs to the polyribonucleotide nucleotidyltransferase family.</text>
</comment>
<gene>
    <name evidence="1" type="primary">pnp</name>
    <name type="ordered locus">BAB1_2169</name>
</gene>